<proteinExistence type="inferred from homology"/>
<name>DHGL_DROME</name>
<protein>
    <recommendedName>
        <fullName>Glucose dehydrogenase [FAD, quinone]</fullName>
        <ecNumber>1.1.5.9</ecNumber>
    </recommendedName>
    <component>
        <recommendedName>
            <fullName>Glucose dehydrogenase [FAD, quinone] short protein</fullName>
        </recommendedName>
    </component>
</protein>
<reference key="1">
    <citation type="journal article" date="1990" name="Mol. Biol. Evol.">
        <title>Evolution of the glucose dehydrogenase gene in Drosophila.</title>
        <authorList>
            <person name="Krasney P.A."/>
            <person name="Carr C.M."/>
            <person name="Cavener D.R."/>
        </authorList>
    </citation>
    <scope>NUCLEOTIDE SEQUENCE [GENOMIC DNA]</scope>
</reference>
<reference key="2">
    <citation type="journal article" date="2000" name="Science">
        <title>The genome sequence of Drosophila melanogaster.</title>
        <authorList>
            <person name="Adams M.D."/>
            <person name="Celniker S.E."/>
            <person name="Holt R.A."/>
            <person name="Evans C.A."/>
            <person name="Gocayne J.D."/>
            <person name="Amanatides P.G."/>
            <person name="Scherer S.E."/>
            <person name="Li P.W."/>
            <person name="Hoskins R.A."/>
            <person name="Galle R.F."/>
            <person name="George R.A."/>
            <person name="Lewis S.E."/>
            <person name="Richards S."/>
            <person name="Ashburner M."/>
            <person name="Henderson S.N."/>
            <person name="Sutton G.G."/>
            <person name="Wortman J.R."/>
            <person name="Yandell M.D."/>
            <person name="Zhang Q."/>
            <person name="Chen L.X."/>
            <person name="Brandon R.C."/>
            <person name="Rogers Y.-H.C."/>
            <person name="Blazej R.G."/>
            <person name="Champe M."/>
            <person name="Pfeiffer B.D."/>
            <person name="Wan K.H."/>
            <person name="Doyle C."/>
            <person name="Baxter E.G."/>
            <person name="Helt G."/>
            <person name="Nelson C.R."/>
            <person name="Miklos G.L.G."/>
            <person name="Abril J.F."/>
            <person name="Agbayani A."/>
            <person name="An H.-J."/>
            <person name="Andrews-Pfannkoch C."/>
            <person name="Baldwin D."/>
            <person name="Ballew R.M."/>
            <person name="Basu A."/>
            <person name="Baxendale J."/>
            <person name="Bayraktaroglu L."/>
            <person name="Beasley E.M."/>
            <person name="Beeson K.Y."/>
            <person name="Benos P.V."/>
            <person name="Berman B.P."/>
            <person name="Bhandari D."/>
            <person name="Bolshakov S."/>
            <person name="Borkova D."/>
            <person name="Botchan M.R."/>
            <person name="Bouck J."/>
            <person name="Brokstein P."/>
            <person name="Brottier P."/>
            <person name="Burtis K.C."/>
            <person name="Busam D.A."/>
            <person name="Butler H."/>
            <person name="Cadieu E."/>
            <person name="Center A."/>
            <person name="Chandra I."/>
            <person name="Cherry J.M."/>
            <person name="Cawley S."/>
            <person name="Dahlke C."/>
            <person name="Davenport L.B."/>
            <person name="Davies P."/>
            <person name="de Pablos B."/>
            <person name="Delcher A."/>
            <person name="Deng Z."/>
            <person name="Mays A.D."/>
            <person name="Dew I."/>
            <person name="Dietz S.M."/>
            <person name="Dodson K."/>
            <person name="Doup L.E."/>
            <person name="Downes M."/>
            <person name="Dugan-Rocha S."/>
            <person name="Dunkov B.C."/>
            <person name="Dunn P."/>
            <person name="Durbin K.J."/>
            <person name="Evangelista C.C."/>
            <person name="Ferraz C."/>
            <person name="Ferriera S."/>
            <person name="Fleischmann W."/>
            <person name="Fosler C."/>
            <person name="Gabrielian A.E."/>
            <person name="Garg N.S."/>
            <person name="Gelbart W.M."/>
            <person name="Glasser K."/>
            <person name="Glodek A."/>
            <person name="Gong F."/>
            <person name="Gorrell J.H."/>
            <person name="Gu Z."/>
            <person name="Guan P."/>
            <person name="Harris M."/>
            <person name="Harris N.L."/>
            <person name="Harvey D.A."/>
            <person name="Heiman T.J."/>
            <person name="Hernandez J.R."/>
            <person name="Houck J."/>
            <person name="Hostin D."/>
            <person name="Houston K.A."/>
            <person name="Howland T.J."/>
            <person name="Wei M.-H."/>
            <person name="Ibegwam C."/>
            <person name="Jalali M."/>
            <person name="Kalush F."/>
            <person name="Karpen G.H."/>
            <person name="Ke Z."/>
            <person name="Kennison J.A."/>
            <person name="Ketchum K.A."/>
            <person name="Kimmel B.E."/>
            <person name="Kodira C.D."/>
            <person name="Kraft C.L."/>
            <person name="Kravitz S."/>
            <person name="Kulp D."/>
            <person name="Lai Z."/>
            <person name="Lasko P."/>
            <person name="Lei Y."/>
            <person name="Levitsky A.A."/>
            <person name="Li J.H."/>
            <person name="Li Z."/>
            <person name="Liang Y."/>
            <person name="Lin X."/>
            <person name="Liu X."/>
            <person name="Mattei B."/>
            <person name="McIntosh T.C."/>
            <person name="McLeod M.P."/>
            <person name="McPherson D."/>
            <person name="Merkulov G."/>
            <person name="Milshina N.V."/>
            <person name="Mobarry C."/>
            <person name="Morris J."/>
            <person name="Moshrefi A."/>
            <person name="Mount S.M."/>
            <person name="Moy M."/>
            <person name="Murphy B."/>
            <person name="Murphy L."/>
            <person name="Muzny D.M."/>
            <person name="Nelson D.L."/>
            <person name="Nelson D.R."/>
            <person name="Nelson K.A."/>
            <person name="Nixon K."/>
            <person name="Nusskern D.R."/>
            <person name="Pacleb J.M."/>
            <person name="Palazzolo M."/>
            <person name="Pittman G.S."/>
            <person name="Pan S."/>
            <person name="Pollard J."/>
            <person name="Puri V."/>
            <person name="Reese M.G."/>
            <person name="Reinert K."/>
            <person name="Remington K."/>
            <person name="Saunders R.D.C."/>
            <person name="Scheeler F."/>
            <person name="Shen H."/>
            <person name="Shue B.C."/>
            <person name="Siden-Kiamos I."/>
            <person name="Simpson M."/>
            <person name="Skupski M.P."/>
            <person name="Smith T.J."/>
            <person name="Spier E."/>
            <person name="Spradling A.C."/>
            <person name="Stapleton M."/>
            <person name="Strong R."/>
            <person name="Sun E."/>
            <person name="Svirskas R."/>
            <person name="Tector C."/>
            <person name="Turner R."/>
            <person name="Venter E."/>
            <person name="Wang A.H."/>
            <person name="Wang X."/>
            <person name="Wang Z.-Y."/>
            <person name="Wassarman D.A."/>
            <person name="Weinstock G.M."/>
            <person name="Weissenbach J."/>
            <person name="Williams S.M."/>
            <person name="Woodage T."/>
            <person name="Worley K.C."/>
            <person name="Wu D."/>
            <person name="Yang S."/>
            <person name="Yao Q.A."/>
            <person name="Ye J."/>
            <person name="Yeh R.-F."/>
            <person name="Zaveri J.S."/>
            <person name="Zhan M."/>
            <person name="Zhang G."/>
            <person name="Zhao Q."/>
            <person name="Zheng L."/>
            <person name="Zheng X.H."/>
            <person name="Zhong F.N."/>
            <person name="Zhong W."/>
            <person name="Zhou X."/>
            <person name="Zhu S.C."/>
            <person name="Zhu X."/>
            <person name="Smith H.O."/>
            <person name="Gibbs R.A."/>
            <person name="Myers E.W."/>
            <person name="Rubin G.M."/>
            <person name="Venter J.C."/>
        </authorList>
    </citation>
    <scope>NUCLEOTIDE SEQUENCE [LARGE SCALE GENOMIC DNA]</scope>
    <source>
        <strain>Berkeley</strain>
    </source>
</reference>
<reference key="3">
    <citation type="journal article" date="2002" name="Genome Biol.">
        <title>Annotation of the Drosophila melanogaster euchromatic genome: a systematic review.</title>
        <authorList>
            <person name="Misra S."/>
            <person name="Crosby M.A."/>
            <person name="Mungall C.J."/>
            <person name="Matthews B.B."/>
            <person name="Campbell K.S."/>
            <person name="Hradecky P."/>
            <person name="Huang Y."/>
            <person name="Kaminker J.S."/>
            <person name="Millburn G.H."/>
            <person name="Prochnik S.E."/>
            <person name="Smith C.D."/>
            <person name="Tupy J.L."/>
            <person name="Whitfield E.J."/>
            <person name="Bayraktaroglu L."/>
            <person name="Berman B.P."/>
            <person name="Bettencourt B.R."/>
            <person name="Celniker S.E."/>
            <person name="de Grey A.D.N.J."/>
            <person name="Drysdale R.A."/>
            <person name="Harris N.L."/>
            <person name="Richter J."/>
            <person name="Russo S."/>
            <person name="Schroeder A.J."/>
            <person name="Shu S.Q."/>
            <person name="Stapleton M."/>
            <person name="Yamada C."/>
            <person name="Ashburner M."/>
            <person name="Gelbart W.M."/>
            <person name="Rubin G.M."/>
            <person name="Lewis S.E."/>
        </authorList>
    </citation>
    <scope>GENOME REANNOTATION</scope>
    <source>
        <strain>Berkeley</strain>
    </source>
</reference>
<reference key="4">
    <citation type="journal article" date="1988" name="Genetics">
        <title>Molecular structure and transformation of the glucose dehydrogenase gene in Drosophila melanogaster.</title>
        <authorList>
            <person name="Whetten R."/>
            <person name="Organ E."/>
            <person name="Krasney P."/>
            <person name="Cox-Foster D."/>
            <person name="Cavener D.R."/>
        </authorList>
    </citation>
    <scope>NUCLEOTIDE SEQUENCE [GENOMIC DNA] OF 1-96</scope>
</reference>
<reference key="5">
    <citation type="journal article" date="1991" name="Mol. Biol. Evol.">
        <title>Drosophila glucose dehydrogenase and yeast alcohol oxidase are homologous and share N-terminal homology with other flavoenzymes.</title>
        <authorList>
            <person name="Cavener D.R."/>
            <person name="Krasney P."/>
        </authorList>
    </citation>
    <scope>SIMILARITY TO YEAST ALCOHOL OXIDASE</scope>
</reference>
<reference key="6">
    <citation type="book" date="1998" name="Proceedings of the 39th annual Drosophila research conference">
        <title>Incorporation of selenocysteine at a UGA codon of Gld.</title>
        <authorList>
            <person name="Perlaky S."/>
            <person name="Merritt K."/>
            <person name="Cavener D."/>
        </authorList>
    </citation>
    <scope>SELENOCYSTEINE AT SEC-613</scope>
</reference>
<dbReference type="EC" id="1.1.5.9"/>
<dbReference type="EMBL" id="M29298">
    <property type="protein sequence ID" value="AAA28571.1"/>
    <property type="status" value="ALT_SEQ"/>
    <property type="molecule type" value="Genomic_DNA"/>
</dbReference>
<dbReference type="EMBL" id="AE014297">
    <property type="protein sequence ID" value="AAF54038.1"/>
    <property type="status" value="ALT_SEQ"/>
    <property type="molecule type" value="Genomic_DNA"/>
</dbReference>
<dbReference type="EMBL" id="X13582">
    <property type="protein sequence ID" value="CAA31918.1"/>
    <property type="molecule type" value="Genomic_DNA"/>
</dbReference>
<dbReference type="PIR" id="A39019">
    <property type="entry name" value="A39019"/>
</dbReference>
<dbReference type="RefSeq" id="NP_477503.1">
    <property type="nucleotide sequence ID" value="NM_058155.5"/>
</dbReference>
<dbReference type="BioGRID" id="66070">
    <property type="interactions" value="3"/>
</dbReference>
<dbReference type="FunCoup" id="P18173">
    <property type="interactions" value="59"/>
</dbReference>
<dbReference type="IntAct" id="P18173">
    <property type="interactions" value="8"/>
</dbReference>
<dbReference type="STRING" id="7227.FBpp0422604"/>
<dbReference type="GlyGen" id="P18173">
    <property type="glycosylation" value="1 site, 1 O-linked glycan (1 site)"/>
</dbReference>
<dbReference type="PaxDb" id="7227-FBpp0081114"/>
<dbReference type="GeneID" id="40875"/>
<dbReference type="KEGG" id="dme:Dmel_CG1152"/>
<dbReference type="AGR" id="FB:FBgn0001112"/>
<dbReference type="CTD" id="40875"/>
<dbReference type="FlyBase" id="FBgn0001112">
    <property type="gene designation" value="Gld"/>
</dbReference>
<dbReference type="VEuPathDB" id="VectorBase:FBgn0001112"/>
<dbReference type="eggNOG" id="KOG1238">
    <property type="taxonomic scope" value="Eukaryota"/>
</dbReference>
<dbReference type="HOGENOM" id="CLU_002865_7_0_1"/>
<dbReference type="InParanoid" id="P18173"/>
<dbReference type="OMA" id="TDPDPNM"/>
<dbReference type="OrthoDB" id="269227at2759"/>
<dbReference type="PhylomeDB" id="P18173"/>
<dbReference type="BioGRID-ORCS" id="40875">
    <property type="hits" value="0 hits in 1 CRISPR screen"/>
</dbReference>
<dbReference type="GenomeRNAi" id="40875"/>
<dbReference type="PRO" id="PR:P18173"/>
<dbReference type="Proteomes" id="UP000000803">
    <property type="component" value="Chromosome 3R"/>
</dbReference>
<dbReference type="ExpressionAtlas" id="P18173">
    <property type="expression patterns" value="baseline and differential"/>
</dbReference>
<dbReference type="GO" id="GO:0005576">
    <property type="term" value="C:extracellular region"/>
    <property type="evidence" value="ECO:0007669"/>
    <property type="project" value="UniProtKB-SubCell"/>
</dbReference>
<dbReference type="GO" id="GO:0050660">
    <property type="term" value="F:flavin adenine dinucleotide binding"/>
    <property type="evidence" value="ECO:0007669"/>
    <property type="project" value="InterPro"/>
</dbReference>
<dbReference type="GO" id="GO:0140762">
    <property type="term" value="F:glucose dehydrogenase (FAD, quinone) activity"/>
    <property type="evidence" value="ECO:0000303"/>
    <property type="project" value="FlyBase"/>
</dbReference>
<dbReference type="GO" id="GO:0016491">
    <property type="term" value="F:oxidoreductase activity"/>
    <property type="evidence" value="ECO:0000318"/>
    <property type="project" value="GO_Central"/>
</dbReference>
<dbReference type="GO" id="GO:0006006">
    <property type="term" value="P:glucose metabolic process"/>
    <property type="evidence" value="ECO:0000304"/>
    <property type="project" value="FlyBase"/>
</dbReference>
<dbReference type="GO" id="GO:0008364">
    <property type="term" value="P:pupal chitin-based cuticle development"/>
    <property type="evidence" value="ECO:0000304"/>
    <property type="project" value="FlyBase"/>
</dbReference>
<dbReference type="GO" id="GO:0046693">
    <property type="term" value="P:sperm storage"/>
    <property type="evidence" value="ECO:0000315"/>
    <property type="project" value="FlyBase"/>
</dbReference>
<dbReference type="Gene3D" id="3.50.50.60">
    <property type="entry name" value="FAD/NAD(P)-binding domain"/>
    <property type="match status" value="1"/>
</dbReference>
<dbReference type="Gene3D" id="3.30.560.10">
    <property type="entry name" value="Glucose Oxidase, domain 3"/>
    <property type="match status" value="1"/>
</dbReference>
<dbReference type="InterPro" id="IPR036188">
    <property type="entry name" value="FAD/NAD-bd_sf"/>
</dbReference>
<dbReference type="InterPro" id="IPR012132">
    <property type="entry name" value="GMC_OxRdtase"/>
</dbReference>
<dbReference type="InterPro" id="IPR000172">
    <property type="entry name" value="GMC_OxRdtase_N"/>
</dbReference>
<dbReference type="InterPro" id="IPR007867">
    <property type="entry name" value="GMC_OxRtase_C"/>
</dbReference>
<dbReference type="PANTHER" id="PTHR11552:SF217">
    <property type="entry name" value="GLUCOSE DEHYDROGENASE [FAD, QUINONE]"/>
    <property type="match status" value="1"/>
</dbReference>
<dbReference type="PANTHER" id="PTHR11552">
    <property type="entry name" value="GLUCOSE-METHANOL-CHOLINE GMC OXIDOREDUCTASE"/>
    <property type="match status" value="1"/>
</dbReference>
<dbReference type="Pfam" id="PF05199">
    <property type="entry name" value="GMC_oxred_C"/>
    <property type="match status" value="1"/>
</dbReference>
<dbReference type="Pfam" id="PF00732">
    <property type="entry name" value="GMC_oxred_N"/>
    <property type="match status" value="1"/>
</dbReference>
<dbReference type="PIRSF" id="PIRSF000137">
    <property type="entry name" value="Alcohol_oxidase"/>
    <property type="match status" value="1"/>
</dbReference>
<dbReference type="SUPFAM" id="SSF54373">
    <property type="entry name" value="FAD-linked reductases, C-terminal domain"/>
    <property type="match status" value="1"/>
</dbReference>
<dbReference type="SUPFAM" id="SSF51905">
    <property type="entry name" value="FAD/NAD(P)-binding domain"/>
    <property type="match status" value="1"/>
</dbReference>
<dbReference type="PROSITE" id="PS00623">
    <property type="entry name" value="GMC_OXRED_1"/>
    <property type="match status" value="1"/>
</dbReference>
<dbReference type="PROSITE" id="PS00624">
    <property type="entry name" value="GMC_OXRED_2"/>
    <property type="match status" value="1"/>
</dbReference>
<accession>P18173</accession>
<accession>Q9VI87</accession>
<evidence type="ECO:0000250" key="1">
    <source>
        <dbReference type="UniProtKB" id="E4QP00"/>
    </source>
</evidence>
<evidence type="ECO:0000305" key="2"/>
<sequence>MSASASACDCLVGVPTGPTLASTCGGSAFMLFMGLLEVFIRSQCDLEDPCGRASSRFRSEPDYEYDFIVIGGGSAGSVVASRLSEVPQWKVLLIEAGGDEPVGAQIPSMFLNFIGSDIDYRYNTEPEPMACLSSMEQRCYWPRGKVLGGTSVLNGMMYVRGNREDYDDWAADGNPGWAYNDVLPFFKKSEDNLDLDEVGTEYHAKGGLLPVGKFPYNPPLSYAILKAGEELGFSVHDLNGQNSTGFMIAQMTARNGIRYSSARAFLRPARMRNNLHILLNTTATKILIHPHTKNVLGVEVSDQFGSTRKILVKKEVVLSAGAVNSPHILLLSGVGPKDELQQVNVRTVHNLPGVGKNLHNHVTYFTNFFIDDADTAPLNWATAMEYLLFRDGLMSGTGISDVTAKLATRYADSPERPDLQLYFGGYLASCARTGQVGELLSNNSRSIQIFPAVLNPRSRGFIGLRSADPLEPPRIVANYLTHEQDVKTLVEGIKFVIRLSQTTPLKQYGMRLDKTVVKGCEAHAFGSDAYWECAVRQNTGPENHQAGSCKMGPSHDPMAVVNHELRVHGIRGLRVMDTSIMPKVSSGNTHAPAVMIAEKGAYLLKRAWGAKVURVDATWTLHRVI</sequence>
<keyword id="KW-0274">FAD</keyword>
<keyword id="KW-0285">Flavoprotein</keyword>
<keyword id="KW-0560">Oxidoreductase</keyword>
<keyword id="KW-1185">Reference proteome</keyword>
<keyword id="KW-0964">Secreted</keyword>
<keyword id="KW-0712">Selenocysteine</keyword>
<keyword id="KW-0732">Signal</keyword>
<feature type="signal peptide">
    <location>
        <begin position="1"/>
        <end position="42"/>
    </location>
</feature>
<feature type="chain" id="PRO_0000012334" description="Glucose dehydrogenase [FAD, quinone]">
    <location>
        <begin position="43"/>
        <end position="625"/>
    </location>
</feature>
<feature type="chain" id="PRO_0000012335" description="Glucose dehydrogenase [FAD, quinone] short protein">
    <location>
        <begin position="43"/>
        <end position="612"/>
    </location>
</feature>
<feature type="active site" description="Proton acceptor" evidence="1">
    <location>
        <position position="544"/>
    </location>
</feature>
<feature type="binding site" evidence="2">
    <location>
        <begin position="66"/>
        <end position="95"/>
    </location>
    <ligand>
        <name>FAD</name>
        <dbReference type="ChEBI" id="CHEBI:57692"/>
    </ligand>
</feature>
<feature type="non-standard amino acid" description="Selenocysteine" evidence="2">
    <location>
        <position position="613"/>
    </location>
</feature>
<feature type="sequence conflict" description="In Ref. 1; AAA28571." evidence="2" ref="1">
    <original>Q</original>
    <variation>R</variation>
    <location>
        <position position="484"/>
    </location>
</feature>
<gene>
    <name type="primary">Gld</name>
    <name type="ORF">CG1152</name>
</gene>
<organism>
    <name type="scientific">Drosophila melanogaster</name>
    <name type="common">Fruit fly</name>
    <dbReference type="NCBI Taxonomy" id="7227"/>
    <lineage>
        <taxon>Eukaryota</taxon>
        <taxon>Metazoa</taxon>
        <taxon>Ecdysozoa</taxon>
        <taxon>Arthropoda</taxon>
        <taxon>Hexapoda</taxon>
        <taxon>Insecta</taxon>
        <taxon>Pterygota</taxon>
        <taxon>Neoptera</taxon>
        <taxon>Endopterygota</taxon>
        <taxon>Diptera</taxon>
        <taxon>Brachycera</taxon>
        <taxon>Muscomorpha</taxon>
        <taxon>Ephydroidea</taxon>
        <taxon>Drosophilidae</taxon>
        <taxon>Drosophila</taxon>
        <taxon>Sophophora</taxon>
    </lineage>
</organism>
<comment type="function">
    <text>Essential for cuticular modification during development.</text>
</comment>
<comment type="catalytic activity">
    <reaction>
        <text>a quinone + D-glucose = D-glucono-1,5-lactone + a quinol</text>
        <dbReference type="Rhea" id="RHEA:47372"/>
        <dbReference type="ChEBI" id="CHEBI:4167"/>
        <dbReference type="ChEBI" id="CHEBI:16217"/>
        <dbReference type="ChEBI" id="CHEBI:24646"/>
        <dbReference type="ChEBI" id="CHEBI:132124"/>
        <dbReference type="EC" id="1.1.5.9"/>
    </reaction>
</comment>
<comment type="cofactor">
    <cofactor>
        <name>FAD</name>
        <dbReference type="ChEBI" id="CHEBI:57692"/>
    </cofactor>
</comment>
<comment type="subcellular location">
    <subcellularLocation>
        <location>Secreted</location>
    </subcellularLocation>
    <text>Secreted as part of the seminal fluid transferred to females.</text>
</comment>
<comment type="similarity">
    <text evidence="2">Belongs to the GMC oxidoreductase family.</text>
</comment>
<comment type="sequence caution" evidence="2">
    <conflict type="erroneous termination">
        <sequence resource="EMBL-CDS" id="AAA28571"/>
    </conflict>
    <text>Truncated C-terminus.</text>
</comment>
<comment type="sequence caution" evidence="2">
    <conflict type="erroneous termination">
        <sequence resource="EMBL-CDS" id="AAF54038"/>
    </conflict>
    <text>Truncated C-terminus.</text>
</comment>